<accession>Q862Z4</accession>
<feature type="chain" id="PRO_0000071019" description="DnaJ homolog subfamily B member 3">
    <location>
        <begin position="1"/>
        <end position="242"/>
    </location>
</feature>
<feature type="domain" description="J" evidence="1">
    <location>
        <begin position="1"/>
        <end position="69"/>
    </location>
</feature>
<gene>
    <name type="primary">DNAJB3</name>
    <name type="synonym">MFSJ1</name>
</gene>
<organism>
    <name type="scientific">Macaca fuscata fuscata</name>
    <name type="common">Japanese macaque</name>
    <dbReference type="NCBI Taxonomy" id="9543"/>
    <lineage>
        <taxon>Eukaryota</taxon>
        <taxon>Metazoa</taxon>
        <taxon>Chordata</taxon>
        <taxon>Craniata</taxon>
        <taxon>Vertebrata</taxon>
        <taxon>Euteleostomi</taxon>
        <taxon>Mammalia</taxon>
        <taxon>Eutheria</taxon>
        <taxon>Euarchontoglires</taxon>
        <taxon>Primates</taxon>
        <taxon>Haplorrhini</taxon>
        <taxon>Catarrhini</taxon>
        <taxon>Cercopithecidae</taxon>
        <taxon>Cercopithecinae</taxon>
        <taxon>Macaca</taxon>
    </lineage>
</organism>
<dbReference type="EMBL" id="AB095737">
    <property type="protein sequence ID" value="BAC56094.1"/>
    <property type="molecule type" value="mRNA"/>
</dbReference>
<dbReference type="SMR" id="Q862Z4"/>
<dbReference type="GO" id="GO:0030544">
    <property type="term" value="F:Hsp70 protein binding"/>
    <property type="evidence" value="ECO:0007669"/>
    <property type="project" value="InterPro"/>
</dbReference>
<dbReference type="GO" id="GO:0051082">
    <property type="term" value="F:unfolded protein binding"/>
    <property type="evidence" value="ECO:0007669"/>
    <property type="project" value="InterPro"/>
</dbReference>
<dbReference type="GO" id="GO:0061077">
    <property type="term" value="P:chaperone-mediated protein folding"/>
    <property type="evidence" value="ECO:0007669"/>
    <property type="project" value="InterPro"/>
</dbReference>
<dbReference type="CDD" id="cd06257">
    <property type="entry name" value="DnaJ"/>
    <property type="match status" value="1"/>
</dbReference>
<dbReference type="FunFam" id="1.10.287.110:FF:000021">
    <property type="entry name" value="DnaJ (Hsp40) homolog, subfamily B, member 2"/>
    <property type="match status" value="1"/>
</dbReference>
<dbReference type="Gene3D" id="1.10.287.110">
    <property type="entry name" value="DnaJ domain"/>
    <property type="match status" value="1"/>
</dbReference>
<dbReference type="InterPro" id="IPR001623">
    <property type="entry name" value="DnaJ_domain"/>
</dbReference>
<dbReference type="InterPro" id="IPR018253">
    <property type="entry name" value="DnaJ_domain_CS"/>
</dbReference>
<dbReference type="InterPro" id="IPR043183">
    <property type="entry name" value="DNJB2/6-like"/>
</dbReference>
<dbReference type="InterPro" id="IPR036869">
    <property type="entry name" value="J_dom_sf"/>
</dbReference>
<dbReference type="PANTHER" id="PTHR45168">
    <property type="entry name" value="DNAJ HOMOLOG SUBFAMILY B MEMBER 2"/>
    <property type="match status" value="1"/>
</dbReference>
<dbReference type="PANTHER" id="PTHR45168:SF4">
    <property type="entry name" value="SIMILAR TO DNAJ HOMOLOG SUBFAMILY B MEMBER 6 (HEAT SHOCK PROTEIN J2) (HSJ-2) (MRJ) (MDJ4)"/>
    <property type="match status" value="1"/>
</dbReference>
<dbReference type="Pfam" id="PF00226">
    <property type="entry name" value="DnaJ"/>
    <property type="match status" value="1"/>
</dbReference>
<dbReference type="PRINTS" id="PR00625">
    <property type="entry name" value="JDOMAIN"/>
</dbReference>
<dbReference type="SMART" id="SM00271">
    <property type="entry name" value="DnaJ"/>
    <property type="match status" value="1"/>
</dbReference>
<dbReference type="SUPFAM" id="SSF46565">
    <property type="entry name" value="Chaperone J-domain"/>
    <property type="match status" value="1"/>
</dbReference>
<dbReference type="PROSITE" id="PS00636">
    <property type="entry name" value="DNAJ_1"/>
    <property type="match status" value="1"/>
</dbReference>
<dbReference type="PROSITE" id="PS50076">
    <property type="entry name" value="DNAJ_2"/>
    <property type="match status" value="1"/>
</dbReference>
<evidence type="ECO:0000255" key="1">
    <source>
        <dbReference type="PROSITE-ProRule" id="PRU00286"/>
    </source>
</evidence>
<evidence type="ECO:0000269" key="2">
    <source>
    </source>
</evidence>
<evidence type="ECO:0000305" key="3"/>
<protein>
    <recommendedName>
        <fullName>DnaJ homolog subfamily B member 3</fullName>
    </recommendedName>
    <alternativeName>
        <fullName>Spermatogenic cell-specific DNAJ homolog</fullName>
    </alternativeName>
</protein>
<sequence length="242" mass="27241">MANYYEVLGVQVQRFPEDIKKAYRKLALKWHPDKNPDNKEEAERRFKQVAEAYEVLSDAKKRDVYDRYGEAGAEGSCAVGRPFEDPFEYIFSFRDPAEVFREFFGGQDPFSFDFFGNPLENILGSRRNSRGSRSRGSAPLFSTFSEFPAFGGGFSSFDTGFSSFGSLGSGGLSSFWMSYGSDGTGSFKSMSTSTEIVDGKKITTKRIIENGQERVEVEEDGEFSLKSFIINSKEQLLRIDTK</sequence>
<proteinExistence type="evidence at transcript level"/>
<comment type="function">
    <text evidence="3">May operate as a co-chaperone of the male germ cell- and haploid stage-specific Hsp70 proteins.</text>
</comment>
<comment type="tissue specificity">
    <text evidence="2">Testis specific.</text>
</comment>
<keyword id="KW-0143">Chaperone</keyword>
<reference key="1">
    <citation type="journal article" date="2003" name="Biochem. Biophys. Res. Commun.">
        <title>Molecular cloning, structure, and testis-specific expression of MFSJ1, a member of the DNAJ protein family, in the Japanese monkey (Macaca fuscata).</title>
        <authorList>
            <person name="Yu S."/>
            <person name="Takenaka O."/>
        </authorList>
    </citation>
    <scope>NUCLEOTIDE SEQUENCE [MRNA]</scope>
    <scope>TISSUE SPECIFICITY</scope>
    <source>
        <tissue>Testis</tissue>
    </source>
</reference>
<name>DNJB3_MACFU</name>